<name>COAX_ACIBT</name>
<evidence type="ECO:0000255" key="1">
    <source>
        <dbReference type="HAMAP-Rule" id="MF_01274"/>
    </source>
</evidence>
<proteinExistence type="inferred from homology"/>
<organism>
    <name type="scientific">Acinetobacter baumannii (strain ATCC 17978 / DSM 105126 / CIP 53.77 / LMG 1025 / NCDC KC755 / 5377)</name>
    <dbReference type="NCBI Taxonomy" id="400667"/>
    <lineage>
        <taxon>Bacteria</taxon>
        <taxon>Pseudomonadati</taxon>
        <taxon>Pseudomonadota</taxon>
        <taxon>Gammaproteobacteria</taxon>
        <taxon>Moraxellales</taxon>
        <taxon>Moraxellaceae</taxon>
        <taxon>Acinetobacter</taxon>
        <taxon>Acinetobacter calcoaceticus/baumannii complex</taxon>
    </lineage>
</organism>
<reference key="1">
    <citation type="journal article" date="2007" name="Genes Dev.">
        <title>New insights into Acinetobacter baumannii pathogenesis revealed by high-density pyrosequencing and transposon mutagenesis.</title>
        <authorList>
            <person name="Smith M.G."/>
            <person name="Gianoulis T.A."/>
            <person name="Pukatzki S."/>
            <person name="Mekalanos J.J."/>
            <person name="Ornston L.N."/>
            <person name="Gerstein M."/>
            <person name="Snyder M."/>
        </authorList>
    </citation>
    <scope>NUCLEOTIDE SEQUENCE [LARGE SCALE GENOMIC DNA]</scope>
    <source>
        <strain>ATCC 17978 / DSM 105126 / CIP 53.77 / LMG 1025 / NCDC KC755 / 5377</strain>
    </source>
</reference>
<keyword id="KW-0067">ATP-binding</keyword>
<keyword id="KW-0173">Coenzyme A biosynthesis</keyword>
<keyword id="KW-0963">Cytoplasm</keyword>
<keyword id="KW-0418">Kinase</keyword>
<keyword id="KW-0547">Nucleotide-binding</keyword>
<keyword id="KW-0630">Potassium</keyword>
<keyword id="KW-0808">Transferase</keyword>
<gene>
    <name evidence="1" type="primary">coaX</name>
    <name type="ordered locus">A1S_0793</name>
</gene>
<accession>A3M2T7</accession>
<feature type="chain" id="PRO_1000140213" description="Type III pantothenate kinase">
    <location>
        <begin position="1"/>
        <end position="244"/>
    </location>
</feature>
<feature type="active site" description="Proton acceptor" evidence="1">
    <location>
        <position position="104"/>
    </location>
</feature>
<feature type="binding site" evidence="1">
    <location>
        <begin position="7"/>
        <end position="14"/>
    </location>
    <ligand>
        <name>ATP</name>
        <dbReference type="ChEBI" id="CHEBI:30616"/>
    </ligand>
</feature>
<feature type="binding site" evidence="1">
    <location>
        <position position="95"/>
    </location>
    <ligand>
        <name>substrate</name>
    </ligand>
</feature>
<feature type="binding site" evidence="1">
    <location>
        <begin position="102"/>
        <end position="105"/>
    </location>
    <ligand>
        <name>substrate</name>
    </ligand>
</feature>
<feature type="binding site" evidence="1">
    <location>
        <position position="126"/>
    </location>
    <ligand>
        <name>ATP</name>
        <dbReference type="ChEBI" id="CHEBI:30616"/>
    </ligand>
</feature>
<feature type="binding site" evidence="1">
    <location>
        <position position="177"/>
    </location>
    <ligand>
        <name>substrate</name>
    </ligand>
</feature>
<comment type="function">
    <text evidence="1">Catalyzes the phosphorylation of pantothenate (Pan), the first step in CoA biosynthesis.</text>
</comment>
<comment type="catalytic activity">
    <reaction evidence="1">
        <text>(R)-pantothenate + ATP = (R)-4'-phosphopantothenate + ADP + H(+)</text>
        <dbReference type="Rhea" id="RHEA:16373"/>
        <dbReference type="ChEBI" id="CHEBI:10986"/>
        <dbReference type="ChEBI" id="CHEBI:15378"/>
        <dbReference type="ChEBI" id="CHEBI:29032"/>
        <dbReference type="ChEBI" id="CHEBI:30616"/>
        <dbReference type="ChEBI" id="CHEBI:456216"/>
        <dbReference type="EC" id="2.7.1.33"/>
    </reaction>
</comment>
<comment type="cofactor">
    <cofactor evidence="1">
        <name>NH4(+)</name>
        <dbReference type="ChEBI" id="CHEBI:28938"/>
    </cofactor>
    <cofactor evidence="1">
        <name>K(+)</name>
        <dbReference type="ChEBI" id="CHEBI:29103"/>
    </cofactor>
    <text evidence="1">A monovalent cation. Ammonium or potassium.</text>
</comment>
<comment type="pathway">
    <text evidence="1">Cofactor biosynthesis; coenzyme A biosynthesis; CoA from (R)-pantothenate: step 1/5.</text>
</comment>
<comment type="subunit">
    <text evidence="1">Homodimer.</text>
</comment>
<comment type="subcellular location">
    <subcellularLocation>
        <location evidence="1">Cytoplasm</location>
    </subcellularLocation>
</comment>
<comment type="similarity">
    <text evidence="1">Belongs to the type III pantothenate kinase family.</text>
</comment>
<dbReference type="EC" id="2.7.1.33" evidence="1"/>
<dbReference type="EMBL" id="CP000521">
    <property type="protein sequence ID" value="ABO11231.2"/>
    <property type="molecule type" value="Genomic_DNA"/>
</dbReference>
<dbReference type="RefSeq" id="WP_000839416.1">
    <property type="nucleotide sequence ID" value="NZ_CP053098.1"/>
</dbReference>
<dbReference type="SMR" id="A3M2T7"/>
<dbReference type="KEGG" id="acb:A1S_0793"/>
<dbReference type="HOGENOM" id="CLU_066627_0_1_6"/>
<dbReference type="UniPathway" id="UPA00241">
    <property type="reaction ID" value="UER00352"/>
</dbReference>
<dbReference type="GO" id="GO:0005737">
    <property type="term" value="C:cytoplasm"/>
    <property type="evidence" value="ECO:0007669"/>
    <property type="project" value="UniProtKB-SubCell"/>
</dbReference>
<dbReference type="GO" id="GO:0005524">
    <property type="term" value="F:ATP binding"/>
    <property type="evidence" value="ECO:0007669"/>
    <property type="project" value="UniProtKB-UniRule"/>
</dbReference>
<dbReference type="GO" id="GO:0004594">
    <property type="term" value="F:pantothenate kinase activity"/>
    <property type="evidence" value="ECO:0007669"/>
    <property type="project" value="UniProtKB-UniRule"/>
</dbReference>
<dbReference type="GO" id="GO:0015937">
    <property type="term" value="P:coenzyme A biosynthetic process"/>
    <property type="evidence" value="ECO:0007669"/>
    <property type="project" value="UniProtKB-UniRule"/>
</dbReference>
<dbReference type="CDD" id="cd24015">
    <property type="entry name" value="ASKHA_NBD_PanK-III"/>
    <property type="match status" value="1"/>
</dbReference>
<dbReference type="Gene3D" id="3.30.420.40">
    <property type="match status" value="2"/>
</dbReference>
<dbReference type="HAMAP" id="MF_01274">
    <property type="entry name" value="Pantothen_kinase_3"/>
    <property type="match status" value="1"/>
</dbReference>
<dbReference type="InterPro" id="IPR043129">
    <property type="entry name" value="ATPase_NBD"/>
</dbReference>
<dbReference type="InterPro" id="IPR004619">
    <property type="entry name" value="Type_III_PanK"/>
</dbReference>
<dbReference type="NCBIfam" id="TIGR00671">
    <property type="entry name" value="baf"/>
    <property type="match status" value="1"/>
</dbReference>
<dbReference type="NCBIfam" id="NF009856">
    <property type="entry name" value="PRK13322.1-1"/>
    <property type="match status" value="1"/>
</dbReference>
<dbReference type="PANTHER" id="PTHR34265">
    <property type="entry name" value="TYPE III PANTOTHENATE KINASE"/>
    <property type="match status" value="1"/>
</dbReference>
<dbReference type="PANTHER" id="PTHR34265:SF1">
    <property type="entry name" value="TYPE III PANTOTHENATE KINASE"/>
    <property type="match status" value="1"/>
</dbReference>
<dbReference type="Pfam" id="PF03309">
    <property type="entry name" value="Pan_kinase"/>
    <property type="match status" value="1"/>
</dbReference>
<dbReference type="SUPFAM" id="SSF53067">
    <property type="entry name" value="Actin-like ATPase domain"/>
    <property type="match status" value="2"/>
</dbReference>
<protein>
    <recommendedName>
        <fullName evidence="1">Type III pantothenate kinase</fullName>
        <ecNumber evidence="1">2.7.1.33</ecNumber>
    </recommendedName>
    <alternativeName>
        <fullName evidence="1">PanK-III</fullName>
    </alternativeName>
    <alternativeName>
        <fullName evidence="1">Pantothenic acid kinase</fullName>
    </alternativeName>
</protein>
<sequence>MKSLWLDIGNTRLKYWITENQQIIEHAAELHLQSPADLLLGLIQHFKHQGLHRIGISSVLDTENNQRIQQILKWLEIPVVFAKVHAEYAGLQCGYEVPSQLGIDRWLQVLAVAEEKENYCIIGCGTALTIDLTKGKQHLGGYILPNLYLQRDALIQNTKGIKIPDSAFDNLNPGNNTVDAVHHGILLGLISTIESIMQQSPKKLLLTGGDAPLFAKFLQKYQPTVETDLLLKGLQQYIAHYPKD</sequence>